<feature type="chain" id="PRO_0000231954" description="Probable RNA 2'-phosphotransferase">
    <location>
        <begin position="1"/>
        <end position="180"/>
    </location>
</feature>
<name>KPTA_PECAS</name>
<evidence type="ECO:0000255" key="1">
    <source>
        <dbReference type="HAMAP-Rule" id="MF_00299"/>
    </source>
</evidence>
<reference key="1">
    <citation type="journal article" date="2004" name="Proc. Natl. Acad. Sci. U.S.A.">
        <title>Genome sequence of the enterobacterial phytopathogen Erwinia carotovora subsp. atroseptica and characterization of virulence factors.</title>
        <authorList>
            <person name="Bell K.S."/>
            <person name="Sebaihia M."/>
            <person name="Pritchard L."/>
            <person name="Holden M.T.G."/>
            <person name="Hyman L.J."/>
            <person name="Holeva M.C."/>
            <person name="Thomson N.R."/>
            <person name="Bentley S.D."/>
            <person name="Churcher L.J.C."/>
            <person name="Mungall K."/>
            <person name="Atkin R."/>
            <person name="Bason N."/>
            <person name="Brooks K."/>
            <person name="Chillingworth T."/>
            <person name="Clark K."/>
            <person name="Doggett J."/>
            <person name="Fraser A."/>
            <person name="Hance Z."/>
            <person name="Hauser H."/>
            <person name="Jagels K."/>
            <person name="Moule S."/>
            <person name="Norbertczak H."/>
            <person name="Ormond D."/>
            <person name="Price C."/>
            <person name="Quail M.A."/>
            <person name="Sanders M."/>
            <person name="Walker D."/>
            <person name="Whitehead S."/>
            <person name="Salmond G.P.C."/>
            <person name="Birch P.R.J."/>
            <person name="Parkhill J."/>
            <person name="Toth I.K."/>
        </authorList>
    </citation>
    <scope>NUCLEOTIDE SEQUENCE [LARGE SCALE GENOMIC DNA]</scope>
    <source>
        <strain>SCRI 1043 / ATCC BAA-672</strain>
    </source>
</reference>
<protein>
    <recommendedName>
        <fullName evidence="1">Probable RNA 2'-phosphotransferase</fullName>
        <ecNumber evidence="1">2.7.1.-</ecNumber>
    </recommendedName>
</protein>
<proteinExistence type="inferred from homology"/>
<dbReference type="EC" id="2.7.1.-" evidence="1"/>
<dbReference type="EMBL" id="BX950851">
    <property type="protein sequence ID" value="CAG73313.1"/>
    <property type="molecule type" value="Genomic_DNA"/>
</dbReference>
<dbReference type="RefSeq" id="WP_011092023.1">
    <property type="nucleotide sequence ID" value="NC_004547.2"/>
</dbReference>
<dbReference type="SMR" id="Q6DA62"/>
<dbReference type="STRING" id="218491.ECA0395"/>
<dbReference type="KEGG" id="eca:ECA0395"/>
<dbReference type="eggNOG" id="COG1859">
    <property type="taxonomic scope" value="Bacteria"/>
</dbReference>
<dbReference type="HOGENOM" id="CLU_052998_4_0_6"/>
<dbReference type="OrthoDB" id="4537997at2"/>
<dbReference type="Proteomes" id="UP000007966">
    <property type="component" value="Chromosome"/>
</dbReference>
<dbReference type="GO" id="GO:0003950">
    <property type="term" value="F:NAD+ poly-ADP-ribosyltransferase activity"/>
    <property type="evidence" value="ECO:0007669"/>
    <property type="project" value="InterPro"/>
</dbReference>
<dbReference type="GO" id="GO:0000215">
    <property type="term" value="F:tRNA 2'-phosphotransferase activity"/>
    <property type="evidence" value="ECO:0007669"/>
    <property type="project" value="TreeGrafter"/>
</dbReference>
<dbReference type="GO" id="GO:0006388">
    <property type="term" value="P:tRNA splicing, via endonucleolytic cleavage and ligation"/>
    <property type="evidence" value="ECO:0007669"/>
    <property type="project" value="UniProtKB-UniRule"/>
</dbReference>
<dbReference type="Gene3D" id="3.20.170.30">
    <property type="match status" value="1"/>
</dbReference>
<dbReference type="Gene3D" id="1.10.10.970">
    <property type="entry name" value="RNA 2'-phosphotransferase, Tpt1/KptA family, N-terminal domain"/>
    <property type="match status" value="1"/>
</dbReference>
<dbReference type="HAMAP" id="MF_00299">
    <property type="entry name" value="KptA"/>
    <property type="match status" value="1"/>
</dbReference>
<dbReference type="InterPro" id="IPR002745">
    <property type="entry name" value="Ptrans_KptA/Tpt1"/>
</dbReference>
<dbReference type="InterPro" id="IPR042081">
    <property type="entry name" value="RNA_2'-PTrans_C"/>
</dbReference>
<dbReference type="InterPro" id="IPR022928">
    <property type="entry name" value="RNA_2'-PTrans_KptA"/>
</dbReference>
<dbReference type="InterPro" id="IPR042080">
    <property type="entry name" value="RNA_2'-PTrans_N"/>
</dbReference>
<dbReference type="NCBIfam" id="NF002014">
    <property type="entry name" value="PRK00819.1-4"/>
    <property type="match status" value="1"/>
</dbReference>
<dbReference type="PANTHER" id="PTHR12684">
    <property type="entry name" value="PUTATIVE PHOSPHOTRANSFERASE"/>
    <property type="match status" value="1"/>
</dbReference>
<dbReference type="PANTHER" id="PTHR12684:SF2">
    <property type="entry name" value="TRNA 2'-PHOSPHOTRANSFERASE 1"/>
    <property type="match status" value="1"/>
</dbReference>
<dbReference type="Pfam" id="PF01885">
    <property type="entry name" value="PTS_2-RNA"/>
    <property type="match status" value="1"/>
</dbReference>
<dbReference type="SUPFAM" id="SSF56399">
    <property type="entry name" value="ADP-ribosylation"/>
    <property type="match status" value="1"/>
</dbReference>
<organism>
    <name type="scientific">Pectobacterium atrosepticum (strain SCRI 1043 / ATCC BAA-672)</name>
    <name type="common">Erwinia carotovora subsp. atroseptica</name>
    <dbReference type="NCBI Taxonomy" id="218491"/>
    <lineage>
        <taxon>Bacteria</taxon>
        <taxon>Pseudomonadati</taxon>
        <taxon>Pseudomonadota</taxon>
        <taxon>Gammaproteobacteria</taxon>
        <taxon>Enterobacterales</taxon>
        <taxon>Pectobacteriaceae</taxon>
        <taxon>Pectobacterium</taxon>
    </lineage>
</organism>
<accession>Q6DA62</accession>
<sequence length="180" mass="20536">MSKKNTDISKFLSYILRHQPEAIGLSLDKEGWVVISDLILCAAEEGYIFDNNLIHSIVNNSDKKRFTISDDGLRIRAAQGHSTQQVDIRYEAKIPPEFLYHGTATRFIISIRVQGLNAKDRQYVHLSADEETAIQVGSRHGKPIVLRIKALTMYEQGFYFYQAANGVWLSNSIPYQFIQE</sequence>
<gene>
    <name evidence="1" type="primary">kptA</name>
    <name type="ordered locus">ECA0395</name>
</gene>
<keyword id="KW-0520">NAD</keyword>
<keyword id="KW-1185">Reference proteome</keyword>
<keyword id="KW-0808">Transferase</keyword>
<comment type="function">
    <text evidence="1">Removes the 2'-phosphate from RNA via an intermediate in which the phosphate is ADP-ribosylated by NAD followed by a presumed transesterification to release the RNA and generate ADP-ribose 1''-2''-cyclic phosphate (APPR&gt;P). May function as an ADP-ribosylase.</text>
</comment>
<comment type="similarity">
    <text evidence="1">Belongs to the KptA/TPT1 family.</text>
</comment>